<comment type="function">
    <text evidence="1">Specifically methylates the cytosine at position 1962 (m5C1962) of 23S rRNA.</text>
</comment>
<comment type="catalytic activity">
    <reaction evidence="1">
        <text>cytidine(1962) in 23S rRNA + S-adenosyl-L-methionine = 5-methylcytidine(1962) in 23S rRNA + S-adenosyl-L-homocysteine + H(+)</text>
        <dbReference type="Rhea" id="RHEA:42912"/>
        <dbReference type="Rhea" id="RHEA-COMP:10382"/>
        <dbReference type="Rhea" id="RHEA-COMP:10386"/>
        <dbReference type="ChEBI" id="CHEBI:15378"/>
        <dbReference type="ChEBI" id="CHEBI:57856"/>
        <dbReference type="ChEBI" id="CHEBI:59789"/>
        <dbReference type="ChEBI" id="CHEBI:74483"/>
        <dbReference type="ChEBI" id="CHEBI:82748"/>
        <dbReference type="EC" id="2.1.1.191"/>
    </reaction>
</comment>
<comment type="subcellular location">
    <subcellularLocation>
        <location evidence="1">Cytoplasm</location>
    </subcellularLocation>
</comment>
<comment type="similarity">
    <text evidence="1">Belongs to the methyltransferase superfamily. RlmI family.</text>
</comment>
<feature type="chain" id="PRO_0000366261" description="Ribosomal RNA large subunit methyltransferase I">
    <location>
        <begin position="1"/>
        <end position="396"/>
    </location>
</feature>
<feature type="domain" description="PUA" evidence="1">
    <location>
        <begin position="2"/>
        <end position="79"/>
    </location>
</feature>
<sequence length="396" mass="44100">MAIRIKLKPGREKSLERRHPWVFSNAIHNIKGKPEAGETVDVVAHDGHWLGRGAWSPESQIQVRIWTFDREEEIDRAFFARRLQRAQIGRNDLIREQGLTGYRLVAAESDGLPGITIDRYANVLVCQLLSTGADLWRDTLVELLAEQYPDCAIYERSDVDSRKKEGLLPVTGLLHGTLPEMPVIIEENGIKIAVDVIKGHKTGFYLDQRDNRAIAARFVKDKSVLNCFCYTGTFGLYAAKAGAASIENVDVSSLALATARLNMQVNGLSDDNVHYNEADVFKLLRQYRDEGKTFDVIVLDPPKFADNKAQLNGACRGYKDINMIALQLLNPGGVLLTFSCSGLMPADLFQKIVADAALDAKREIQFIERLSQASDHPIGSAFPEGFYLKGLVARAW</sequence>
<keyword id="KW-0963">Cytoplasm</keyword>
<keyword id="KW-0489">Methyltransferase</keyword>
<keyword id="KW-0694">RNA-binding</keyword>
<keyword id="KW-0698">rRNA processing</keyword>
<keyword id="KW-0949">S-adenosyl-L-methionine</keyword>
<keyword id="KW-0808">Transferase</keyword>
<reference key="1">
    <citation type="submission" date="2007-04" db="EMBL/GenBank/DDBJ databases">
        <title>Complete sequence of Shewanella putrefaciens CN-32.</title>
        <authorList>
            <consortium name="US DOE Joint Genome Institute"/>
            <person name="Copeland A."/>
            <person name="Lucas S."/>
            <person name="Lapidus A."/>
            <person name="Barry K."/>
            <person name="Detter J.C."/>
            <person name="Glavina del Rio T."/>
            <person name="Hammon N."/>
            <person name="Israni S."/>
            <person name="Dalin E."/>
            <person name="Tice H."/>
            <person name="Pitluck S."/>
            <person name="Chain P."/>
            <person name="Malfatti S."/>
            <person name="Shin M."/>
            <person name="Vergez L."/>
            <person name="Schmutz J."/>
            <person name="Larimer F."/>
            <person name="Land M."/>
            <person name="Hauser L."/>
            <person name="Kyrpides N."/>
            <person name="Mikhailova N."/>
            <person name="Romine M.F."/>
            <person name="Fredrickson J."/>
            <person name="Tiedje J."/>
            <person name="Richardson P."/>
        </authorList>
    </citation>
    <scope>NUCLEOTIDE SEQUENCE [LARGE SCALE GENOMIC DNA]</scope>
    <source>
        <strain>CN-32 / ATCC BAA-453</strain>
    </source>
</reference>
<name>RLMI_SHEPC</name>
<dbReference type="EC" id="2.1.1.191" evidence="1"/>
<dbReference type="EMBL" id="CP000681">
    <property type="protein sequence ID" value="ABP76647.1"/>
    <property type="molecule type" value="Genomic_DNA"/>
</dbReference>
<dbReference type="SMR" id="A4Y9L4"/>
<dbReference type="STRING" id="319224.Sputcn32_2932"/>
<dbReference type="KEGG" id="spc:Sputcn32_2932"/>
<dbReference type="eggNOG" id="COG1092">
    <property type="taxonomic scope" value="Bacteria"/>
</dbReference>
<dbReference type="HOGENOM" id="CLU_014042_0_0_6"/>
<dbReference type="GO" id="GO:0005737">
    <property type="term" value="C:cytoplasm"/>
    <property type="evidence" value="ECO:0007669"/>
    <property type="project" value="UniProtKB-SubCell"/>
</dbReference>
<dbReference type="GO" id="GO:0003723">
    <property type="term" value="F:RNA binding"/>
    <property type="evidence" value="ECO:0007669"/>
    <property type="project" value="UniProtKB-KW"/>
</dbReference>
<dbReference type="GO" id="GO:0016434">
    <property type="term" value="F:rRNA (cytosine) methyltransferase activity"/>
    <property type="evidence" value="ECO:0007669"/>
    <property type="project" value="UniProtKB-UniRule"/>
</dbReference>
<dbReference type="CDD" id="cd02440">
    <property type="entry name" value="AdoMet_MTases"/>
    <property type="match status" value="1"/>
</dbReference>
<dbReference type="CDD" id="cd21153">
    <property type="entry name" value="PUA_RlmI"/>
    <property type="match status" value="1"/>
</dbReference>
<dbReference type="CDD" id="cd11572">
    <property type="entry name" value="RlmI_M_like"/>
    <property type="match status" value="1"/>
</dbReference>
<dbReference type="Gene3D" id="2.30.130.10">
    <property type="entry name" value="PUA domain"/>
    <property type="match status" value="1"/>
</dbReference>
<dbReference type="Gene3D" id="3.30.750.80">
    <property type="entry name" value="RNA methyltransferase domain (HRMD) like"/>
    <property type="match status" value="1"/>
</dbReference>
<dbReference type="Gene3D" id="3.40.50.150">
    <property type="entry name" value="Vaccinia Virus protein VP39"/>
    <property type="match status" value="1"/>
</dbReference>
<dbReference type="HAMAP" id="MF_01857">
    <property type="entry name" value="23SrRNA_methyltr_I"/>
    <property type="match status" value="1"/>
</dbReference>
<dbReference type="InterPro" id="IPR002478">
    <property type="entry name" value="PUA"/>
</dbReference>
<dbReference type="InterPro" id="IPR015947">
    <property type="entry name" value="PUA-like_sf"/>
</dbReference>
<dbReference type="InterPro" id="IPR036974">
    <property type="entry name" value="PUA_sf"/>
</dbReference>
<dbReference type="InterPro" id="IPR023542">
    <property type="entry name" value="RLMI"/>
</dbReference>
<dbReference type="InterPro" id="IPR041532">
    <property type="entry name" value="RlmI-like_PUA"/>
</dbReference>
<dbReference type="InterPro" id="IPR019614">
    <property type="entry name" value="SAM-dep_methyl-trfase"/>
</dbReference>
<dbReference type="InterPro" id="IPR029063">
    <property type="entry name" value="SAM-dependent_MTases_sf"/>
</dbReference>
<dbReference type="PANTHER" id="PTHR42873">
    <property type="entry name" value="RIBOSOMAL RNA LARGE SUBUNIT METHYLTRANSFERASE"/>
    <property type="match status" value="1"/>
</dbReference>
<dbReference type="PANTHER" id="PTHR42873:SF1">
    <property type="entry name" value="S-ADENOSYLMETHIONINE-DEPENDENT METHYLTRANSFERASE DOMAIN-CONTAINING PROTEIN"/>
    <property type="match status" value="1"/>
</dbReference>
<dbReference type="Pfam" id="PF10672">
    <property type="entry name" value="Methyltrans_SAM"/>
    <property type="match status" value="1"/>
</dbReference>
<dbReference type="Pfam" id="PF17785">
    <property type="entry name" value="PUA_3"/>
    <property type="match status" value="1"/>
</dbReference>
<dbReference type="SMART" id="SM00359">
    <property type="entry name" value="PUA"/>
    <property type="match status" value="1"/>
</dbReference>
<dbReference type="SUPFAM" id="SSF88697">
    <property type="entry name" value="PUA domain-like"/>
    <property type="match status" value="1"/>
</dbReference>
<dbReference type="SUPFAM" id="SSF53335">
    <property type="entry name" value="S-adenosyl-L-methionine-dependent methyltransferases"/>
    <property type="match status" value="1"/>
</dbReference>
<dbReference type="PROSITE" id="PS50890">
    <property type="entry name" value="PUA"/>
    <property type="match status" value="1"/>
</dbReference>
<organism>
    <name type="scientific">Shewanella putrefaciens (strain CN-32 / ATCC BAA-453)</name>
    <dbReference type="NCBI Taxonomy" id="319224"/>
    <lineage>
        <taxon>Bacteria</taxon>
        <taxon>Pseudomonadati</taxon>
        <taxon>Pseudomonadota</taxon>
        <taxon>Gammaproteobacteria</taxon>
        <taxon>Alteromonadales</taxon>
        <taxon>Shewanellaceae</taxon>
        <taxon>Shewanella</taxon>
    </lineage>
</organism>
<evidence type="ECO:0000255" key="1">
    <source>
        <dbReference type="HAMAP-Rule" id="MF_01857"/>
    </source>
</evidence>
<proteinExistence type="inferred from homology"/>
<gene>
    <name evidence="1" type="primary">rlmI</name>
    <name type="ordered locus">Sputcn32_2932</name>
</gene>
<protein>
    <recommendedName>
        <fullName evidence="1">Ribosomal RNA large subunit methyltransferase I</fullName>
        <ecNumber evidence="1">2.1.1.191</ecNumber>
    </recommendedName>
    <alternativeName>
        <fullName evidence="1">23S rRNA m5C1962 methyltransferase</fullName>
    </alternativeName>
    <alternativeName>
        <fullName evidence="1">rRNA (cytosine-C(5)-)-methyltransferase RlmI</fullName>
    </alternativeName>
</protein>
<accession>A4Y9L4</accession>